<evidence type="ECO:0000255" key="1">
    <source>
        <dbReference type="HAMAP-Rule" id="MF_01659"/>
    </source>
</evidence>
<keyword id="KW-0460">Magnesium</keyword>
<keyword id="KW-0464">Manganese</keyword>
<keyword id="KW-0474">Menaquinone biosynthesis</keyword>
<keyword id="KW-0479">Metal-binding</keyword>
<keyword id="KW-0786">Thiamine pyrophosphate</keyword>
<keyword id="KW-0808">Transferase</keyword>
<gene>
    <name evidence="1" type="primary">menD</name>
    <name type="ordered locus">SEN2291</name>
</gene>
<organism>
    <name type="scientific">Salmonella enteritidis PT4 (strain P125109)</name>
    <dbReference type="NCBI Taxonomy" id="550537"/>
    <lineage>
        <taxon>Bacteria</taxon>
        <taxon>Pseudomonadati</taxon>
        <taxon>Pseudomonadota</taxon>
        <taxon>Gammaproteobacteria</taxon>
        <taxon>Enterobacterales</taxon>
        <taxon>Enterobacteriaceae</taxon>
        <taxon>Salmonella</taxon>
    </lineage>
</organism>
<name>MEND_SALEP</name>
<comment type="function">
    <text evidence="1">Catalyzes the thiamine diphosphate-dependent decarboxylation of 2-oxoglutarate and the subsequent addition of the resulting succinic semialdehyde-thiamine pyrophosphate anion to isochorismate to yield 2-succinyl-5-enolpyruvyl-6-hydroxy-3-cyclohexene-1-carboxylate (SEPHCHC).</text>
</comment>
<comment type="catalytic activity">
    <reaction evidence="1">
        <text>isochorismate + 2-oxoglutarate + H(+) = 5-enolpyruvoyl-6-hydroxy-2-succinyl-cyclohex-3-ene-1-carboxylate + CO2</text>
        <dbReference type="Rhea" id="RHEA:25593"/>
        <dbReference type="ChEBI" id="CHEBI:15378"/>
        <dbReference type="ChEBI" id="CHEBI:16526"/>
        <dbReference type="ChEBI" id="CHEBI:16810"/>
        <dbReference type="ChEBI" id="CHEBI:29780"/>
        <dbReference type="ChEBI" id="CHEBI:58818"/>
        <dbReference type="EC" id="2.2.1.9"/>
    </reaction>
</comment>
<comment type="cofactor">
    <cofactor evidence="1">
        <name>Mg(2+)</name>
        <dbReference type="ChEBI" id="CHEBI:18420"/>
    </cofactor>
    <cofactor evidence="1">
        <name>Mn(2+)</name>
        <dbReference type="ChEBI" id="CHEBI:29035"/>
    </cofactor>
</comment>
<comment type="cofactor">
    <cofactor evidence="1">
        <name>thiamine diphosphate</name>
        <dbReference type="ChEBI" id="CHEBI:58937"/>
    </cofactor>
    <text evidence="1">Binds 1 thiamine pyrophosphate per subunit.</text>
</comment>
<comment type="pathway">
    <text evidence="1">Quinol/quinone metabolism; 1,4-dihydroxy-2-naphthoate biosynthesis; 1,4-dihydroxy-2-naphthoate from chorismate: step 2/7.</text>
</comment>
<comment type="pathway">
    <text evidence="1">Quinol/quinone metabolism; menaquinone biosynthesis.</text>
</comment>
<comment type="subunit">
    <text evidence="1">Homodimer.</text>
</comment>
<comment type="similarity">
    <text evidence="1">Belongs to the TPP enzyme family. MenD subfamily.</text>
</comment>
<protein>
    <recommendedName>
        <fullName evidence="1">2-succinyl-5-enolpyruvyl-6-hydroxy-3-cyclohexene-1-carboxylate synthase</fullName>
        <shortName evidence="1">SEPHCHC synthase</shortName>
        <ecNumber evidence="1">2.2.1.9</ecNumber>
    </recommendedName>
    <alternativeName>
        <fullName evidence="1">Menaquinone biosynthesis protein MenD</fullName>
    </alternativeName>
</protein>
<accession>B5R2Z0</accession>
<reference key="1">
    <citation type="journal article" date="2008" name="Genome Res.">
        <title>Comparative genome analysis of Salmonella enteritidis PT4 and Salmonella gallinarum 287/91 provides insights into evolutionary and host adaptation pathways.</title>
        <authorList>
            <person name="Thomson N.R."/>
            <person name="Clayton D.J."/>
            <person name="Windhorst D."/>
            <person name="Vernikos G."/>
            <person name="Davidson S."/>
            <person name="Churcher C."/>
            <person name="Quail M.A."/>
            <person name="Stevens M."/>
            <person name="Jones M.A."/>
            <person name="Watson M."/>
            <person name="Barron A."/>
            <person name="Layton A."/>
            <person name="Pickard D."/>
            <person name="Kingsley R.A."/>
            <person name="Bignell A."/>
            <person name="Clark L."/>
            <person name="Harris B."/>
            <person name="Ormond D."/>
            <person name="Abdellah Z."/>
            <person name="Brooks K."/>
            <person name="Cherevach I."/>
            <person name="Chillingworth T."/>
            <person name="Woodward J."/>
            <person name="Norberczak H."/>
            <person name="Lord A."/>
            <person name="Arrowsmith C."/>
            <person name="Jagels K."/>
            <person name="Moule S."/>
            <person name="Mungall K."/>
            <person name="Saunders M."/>
            <person name="Whitehead S."/>
            <person name="Chabalgoity J.A."/>
            <person name="Maskell D."/>
            <person name="Humphreys T."/>
            <person name="Roberts M."/>
            <person name="Barrow P.A."/>
            <person name="Dougan G."/>
            <person name="Parkhill J."/>
        </authorList>
    </citation>
    <scope>NUCLEOTIDE SEQUENCE [LARGE SCALE GENOMIC DNA]</scope>
    <source>
        <strain>P125109</strain>
    </source>
</reference>
<proteinExistence type="inferred from homology"/>
<feature type="chain" id="PRO_1000187090" description="2-succinyl-5-enolpyruvyl-6-hydroxy-3-cyclohexene-1-carboxylate synthase">
    <location>
        <begin position="1"/>
        <end position="556"/>
    </location>
</feature>
<sequence>MSVSAFNRRWAAVILEALTRHGVRHVCIAPGSRSTPLTLAAAENPAFIHHTHFDERGLGHLALGLAKVSQQPVAVIVTSGTAVANLYPALIEAGLTGEKLILLTADRPPELIDCGANQAIRQAGMFASHPSQTLSLPRPTQDIPARWLVSTIDNALAMLHAGALHINCPFAEPLYGDMNDTGLVWQQRLGDWWQDEKPWLREARRLESDKQRDWFFWRQKRGVVVAGRMSAEEGKKVAQWAQTLGWPLIGDVLSQTGQPLPCADLWLGNAKAVTELQQAQIVVQLGSSLTGKRLLQWQATCEPEEYWVIDNIEGRLDPAHHRGRRLVAKIADWLELHPAEKRKPWCVEIPRLAELAWQRVVAQRDTFGEAQLAHRIRDYLPEQGQLFVGNSLVVRLIDALSQLPAGYPVYSNRGASGIDGLLSTAAGVQRASAKSTLAIVGDLSALYDLNALALLRQVSAPFVLIVVNNNGGQIFSLLPTPQSKRERFYLMPQNVHFDHAAAMFNLRYHRPENWEELESALAGAWRTPATTVIELVVNDTDGAQTLQQLLAQVSHL</sequence>
<dbReference type="EC" id="2.2.1.9" evidence="1"/>
<dbReference type="EMBL" id="AM933172">
    <property type="protein sequence ID" value="CAR33875.1"/>
    <property type="molecule type" value="Genomic_DNA"/>
</dbReference>
<dbReference type="RefSeq" id="WP_000116392.1">
    <property type="nucleotide sequence ID" value="NC_011294.1"/>
</dbReference>
<dbReference type="SMR" id="B5R2Z0"/>
<dbReference type="KEGG" id="set:SEN2291"/>
<dbReference type="HOGENOM" id="CLU_006051_3_0_6"/>
<dbReference type="UniPathway" id="UPA00079"/>
<dbReference type="UniPathway" id="UPA01057">
    <property type="reaction ID" value="UER00164"/>
</dbReference>
<dbReference type="Proteomes" id="UP000000613">
    <property type="component" value="Chromosome"/>
</dbReference>
<dbReference type="GO" id="GO:0070204">
    <property type="term" value="F:2-succinyl-5-enolpyruvyl-6-hydroxy-3-cyclohexene-1-carboxylic-acid synthase activity"/>
    <property type="evidence" value="ECO:0007669"/>
    <property type="project" value="UniProtKB-UniRule"/>
</dbReference>
<dbReference type="GO" id="GO:0000287">
    <property type="term" value="F:magnesium ion binding"/>
    <property type="evidence" value="ECO:0007669"/>
    <property type="project" value="UniProtKB-UniRule"/>
</dbReference>
<dbReference type="GO" id="GO:0030145">
    <property type="term" value="F:manganese ion binding"/>
    <property type="evidence" value="ECO:0007669"/>
    <property type="project" value="UniProtKB-UniRule"/>
</dbReference>
<dbReference type="GO" id="GO:0030976">
    <property type="term" value="F:thiamine pyrophosphate binding"/>
    <property type="evidence" value="ECO:0007669"/>
    <property type="project" value="UniProtKB-UniRule"/>
</dbReference>
<dbReference type="GO" id="GO:0009234">
    <property type="term" value="P:menaquinone biosynthetic process"/>
    <property type="evidence" value="ECO:0007669"/>
    <property type="project" value="UniProtKB-UniRule"/>
</dbReference>
<dbReference type="CDD" id="cd07037">
    <property type="entry name" value="TPP_PYR_MenD"/>
    <property type="match status" value="1"/>
</dbReference>
<dbReference type="CDD" id="cd02009">
    <property type="entry name" value="TPP_SHCHC_synthase"/>
    <property type="match status" value="1"/>
</dbReference>
<dbReference type="FunFam" id="3.40.50.1220:FF:000010">
    <property type="entry name" value="2-succinyl-5-enolpyruvyl-6-hydroxy-3-cyclohexene-1-carboxylate synthase"/>
    <property type="match status" value="1"/>
</dbReference>
<dbReference type="FunFam" id="3.40.50.970:FF:000029">
    <property type="entry name" value="2-succinyl-5-enolpyruvyl-6-hydroxy-3-cyclohexene-1-carboxylate synthase"/>
    <property type="match status" value="1"/>
</dbReference>
<dbReference type="Gene3D" id="3.40.50.970">
    <property type="match status" value="2"/>
</dbReference>
<dbReference type="Gene3D" id="3.40.50.1220">
    <property type="entry name" value="TPP-binding domain"/>
    <property type="match status" value="1"/>
</dbReference>
<dbReference type="HAMAP" id="MF_01659">
    <property type="entry name" value="MenD"/>
    <property type="match status" value="1"/>
</dbReference>
<dbReference type="InterPro" id="IPR004433">
    <property type="entry name" value="MenaQ_synth_MenD"/>
</dbReference>
<dbReference type="InterPro" id="IPR032264">
    <property type="entry name" value="MenD_middle"/>
</dbReference>
<dbReference type="InterPro" id="IPR029061">
    <property type="entry name" value="THDP-binding"/>
</dbReference>
<dbReference type="InterPro" id="IPR012001">
    <property type="entry name" value="Thiamin_PyroP_enz_TPP-bd_dom"/>
</dbReference>
<dbReference type="InterPro" id="IPR011766">
    <property type="entry name" value="TPP_enzyme_TPP-bd"/>
</dbReference>
<dbReference type="NCBIfam" id="TIGR00173">
    <property type="entry name" value="menD"/>
    <property type="match status" value="1"/>
</dbReference>
<dbReference type="PANTHER" id="PTHR42916">
    <property type="entry name" value="2-SUCCINYL-5-ENOLPYRUVYL-6-HYDROXY-3-CYCLOHEXENE-1-CARBOXYLATE SYNTHASE"/>
    <property type="match status" value="1"/>
</dbReference>
<dbReference type="PANTHER" id="PTHR42916:SF1">
    <property type="entry name" value="PROTEIN PHYLLO, CHLOROPLASTIC"/>
    <property type="match status" value="1"/>
</dbReference>
<dbReference type="Pfam" id="PF02775">
    <property type="entry name" value="TPP_enzyme_C"/>
    <property type="match status" value="1"/>
</dbReference>
<dbReference type="Pfam" id="PF16582">
    <property type="entry name" value="TPP_enzyme_M_2"/>
    <property type="match status" value="1"/>
</dbReference>
<dbReference type="Pfam" id="PF02776">
    <property type="entry name" value="TPP_enzyme_N"/>
    <property type="match status" value="1"/>
</dbReference>
<dbReference type="PIRSF" id="PIRSF004983">
    <property type="entry name" value="MenD"/>
    <property type="match status" value="1"/>
</dbReference>
<dbReference type="SUPFAM" id="SSF52518">
    <property type="entry name" value="Thiamin diphosphate-binding fold (THDP-binding)"/>
    <property type="match status" value="2"/>
</dbReference>